<evidence type="ECO:0000255" key="1">
    <source>
        <dbReference type="HAMAP-Rule" id="MF_00038"/>
    </source>
</evidence>
<gene>
    <name evidence="1" type="primary">mraY</name>
    <name type="ordered locus">CCA_00868</name>
</gene>
<feature type="chain" id="PRO_0000108804" description="Phospho-N-acetylmuramoyl-pentapeptide-transferase">
    <location>
        <begin position="1"/>
        <end position="348"/>
    </location>
</feature>
<feature type="transmembrane region" description="Helical" evidence="1">
    <location>
        <begin position="11"/>
        <end position="31"/>
    </location>
</feature>
<feature type="transmembrane region" description="Helical" evidence="1">
    <location>
        <begin position="68"/>
        <end position="88"/>
    </location>
</feature>
<feature type="transmembrane region" description="Helical" evidence="1">
    <location>
        <begin position="92"/>
        <end position="112"/>
    </location>
</feature>
<feature type="transmembrane region" description="Helical" evidence="1">
    <location>
        <begin position="128"/>
        <end position="148"/>
    </location>
</feature>
<feature type="transmembrane region" description="Helical" evidence="1">
    <location>
        <begin position="165"/>
        <end position="185"/>
    </location>
</feature>
<feature type="transmembrane region" description="Helical" evidence="1">
    <location>
        <begin position="196"/>
        <end position="216"/>
    </location>
</feature>
<feature type="transmembrane region" description="Helical" evidence="1">
    <location>
        <begin position="222"/>
        <end position="242"/>
    </location>
</feature>
<feature type="transmembrane region" description="Helical" evidence="1">
    <location>
        <begin position="251"/>
        <end position="271"/>
    </location>
</feature>
<feature type="transmembrane region" description="Helical" evidence="1">
    <location>
        <begin position="276"/>
        <end position="296"/>
    </location>
</feature>
<feature type="transmembrane region" description="Helical" evidence="1">
    <location>
        <begin position="326"/>
        <end position="346"/>
    </location>
</feature>
<name>MRAY_CHLCV</name>
<proteinExistence type="inferred from homology"/>
<organism>
    <name type="scientific">Chlamydia caviae (strain ATCC VR-813 / DSM 19441 / 03DC25 / GPIC)</name>
    <name type="common">Chlamydophila caviae</name>
    <dbReference type="NCBI Taxonomy" id="227941"/>
    <lineage>
        <taxon>Bacteria</taxon>
        <taxon>Pseudomonadati</taxon>
        <taxon>Chlamydiota</taxon>
        <taxon>Chlamydiia</taxon>
        <taxon>Chlamydiales</taxon>
        <taxon>Chlamydiaceae</taxon>
        <taxon>Chlamydia/Chlamydophila group</taxon>
        <taxon>Chlamydia</taxon>
    </lineage>
</organism>
<reference key="1">
    <citation type="journal article" date="2003" name="Nucleic Acids Res.">
        <title>Genome sequence of Chlamydophila caviae (Chlamydia psittaci GPIC): examining the role of niche-specific genes in the evolution of the Chlamydiaceae.</title>
        <authorList>
            <person name="Read T.D."/>
            <person name="Myers G.S.A."/>
            <person name="Brunham R.C."/>
            <person name="Nelson W.C."/>
            <person name="Paulsen I.T."/>
            <person name="Heidelberg J.F."/>
            <person name="Holtzapple E.K."/>
            <person name="Khouri H.M."/>
            <person name="Federova N.B."/>
            <person name="Carty H.A."/>
            <person name="Umayam L.A."/>
            <person name="Haft D.H."/>
            <person name="Peterson J.D."/>
            <person name="Beanan M.J."/>
            <person name="White O."/>
            <person name="Salzberg S.L."/>
            <person name="Hsia R.-C."/>
            <person name="McClarty G."/>
            <person name="Rank R.G."/>
            <person name="Bavoil P.M."/>
            <person name="Fraser C.M."/>
        </authorList>
    </citation>
    <scope>NUCLEOTIDE SEQUENCE [LARGE SCALE GENOMIC DNA]</scope>
    <source>
        <strain>ATCC VR-813 / DSM 19441 / 03DC25 / GPIC</strain>
    </source>
</reference>
<protein>
    <recommendedName>
        <fullName evidence="1">Phospho-N-acetylmuramoyl-pentapeptide-transferase</fullName>
        <ecNumber evidence="1">2.7.8.13</ecNumber>
    </recommendedName>
    <alternativeName>
        <fullName evidence="1">UDP-MurNAc-pentapeptide phosphotransferase</fullName>
    </alternativeName>
</protein>
<keyword id="KW-0131">Cell cycle</keyword>
<keyword id="KW-0132">Cell division</keyword>
<keyword id="KW-0997">Cell inner membrane</keyword>
<keyword id="KW-1003">Cell membrane</keyword>
<keyword id="KW-0133">Cell shape</keyword>
<keyword id="KW-0961">Cell wall biogenesis/degradation</keyword>
<keyword id="KW-0460">Magnesium</keyword>
<keyword id="KW-0472">Membrane</keyword>
<keyword id="KW-0479">Metal-binding</keyword>
<keyword id="KW-0573">Peptidoglycan synthesis</keyword>
<keyword id="KW-0808">Transferase</keyword>
<keyword id="KW-0812">Transmembrane</keyword>
<keyword id="KW-1133">Transmembrane helix</keyword>
<sequence>MSSVFSYFNESWMLLLATVFGLAFFLGIFLGRPVISWLKKQNHYDQVHKEHCEKLEALHQDKKNTPTAGGILFCIVLLTTVFLWLPLGKLSTWLFVFLIISWGTLGWYDDIIKKERKKGHGITAKQKFVIQLIISAITIVTIFSIYKGSALFCTLQVPFFGTVSVGHSILGKFFYFVLAMLTIVGTSNAVNLTDGLDGLAAGTTCMSALGLLVVALSNPTMPLAQDVSIVLSALIGISFAFLKYNRAPAQVFMGDTGSLLIGGVLGSCAVMLRAELLLILLGGVFVAEAGSVILQVGSCRLRKKRIFLCSPLHHHYEYKGISETKVVARFYIAGLLCMILGIIAALWR</sequence>
<comment type="function">
    <text evidence="1">Catalyzes the initial step of the lipid cycle reactions in the biosynthesis of the cell wall peptidoglycan: transfers peptidoglycan precursor phospho-MurNAc-pentapeptide from UDP-MurNAc-pentapeptide onto the lipid carrier undecaprenyl phosphate, yielding undecaprenyl-pyrophosphoryl-MurNAc-pentapeptide, known as lipid I.</text>
</comment>
<comment type="catalytic activity">
    <reaction evidence="1">
        <text>UDP-N-acetyl-alpha-D-muramoyl-L-alanyl-gamma-D-glutamyl-meso-2,6-diaminopimeloyl-D-alanyl-D-alanine + di-trans,octa-cis-undecaprenyl phosphate = di-trans,octa-cis-undecaprenyl diphospho-N-acetyl-alpha-D-muramoyl-L-alanyl-D-glutamyl-meso-2,6-diaminopimeloyl-D-alanyl-D-alanine + UMP</text>
        <dbReference type="Rhea" id="RHEA:28386"/>
        <dbReference type="ChEBI" id="CHEBI:57865"/>
        <dbReference type="ChEBI" id="CHEBI:60392"/>
        <dbReference type="ChEBI" id="CHEBI:61386"/>
        <dbReference type="ChEBI" id="CHEBI:61387"/>
        <dbReference type="EC" id="2.7.8.13"/>
    </reaction>
</comment>
<comment type="cofactor">
    <cofactor evidence="1">
        <name>Mg(2+)</name>
        <dbReference type="ChEBI" id="CHEBI:18420"/>
    </cofactor>
</comment>
<comment type="pathway">
    <text evidence="1">Cell wall biogenesis; peptidoglycan biosynthesis.</text>
</comment>
<comment type="subcellular location">
    <subcellularLocation>
        <location evidence="1">Cell inner membrane</location>
        <topology evidence="1">Multi-pass membrane protein</topology>
    </subcellularLocation>
</comment>
<comment type="similarity">
    <text evidence="1">Belongs to the glycosyltransferase 4 family. MraY subfamily.</text>
</comment>
<accession>Q821S0</accession>
<dbReference type="EC" id="2.7.8.13" evidence="1"/>
<dbReference type="EMBL" id="AE015925">
    <property type="protein sequence ID" value="AAP05609.1"/>
    <property type="molecule type" value="Genomic_DNA"/>
</dbReference>
<dbReference type="RefSeq" id="WP_011006823.1">
    <property type="nucleotide sequence ID" value="NC_003361.3"/>
</dbReference>
<dbReference type="SMR" id="Q821S0"/>
<dbReference type="STRING" id="227941.CCA_00868"/>
<dbReference type="KEGG" id="cca:CCA_00868"/>
<dbReference type="eggNOG" id="COG0472">
    <property type="taxonomic scope" value="Bacteria"/>
</dbReference>
<dbReference type="HOGENOM" id="CLU_023982_0_1_0"/>
<dbReference type="OrthoDB" id="9805475at2"/>
<dbReference type="UniPathway" id="UPA00219"/>
<dbReference type="Proteomes" id="UP000002193">
    <property type="component" value="Chromosome"/>
</dbReference>
<dbReference type="GO" id="GO:0005886">
    <property type="term" value="C:plasma membrane"/>
    <property type="evidence" value="ECO:0007669"/>
    <property type="project" value="UniProtKB-SubCell"/>
</dbReference>
<dbReference type="GO" id="GO:0046872">
    <property type="term" value="F:metal ion binding"/>
    <property type="evidence" value="ECO:0007669"/>
    <property type="project" value="UniProtKB-KW"/>
</dbReference>
<dbReference type="GO" id="GO:0008963">
    <property type="term" value="F:phospho-N-acetylmuramoyl-pentapeptide-transferase activity"/>
    <property type="evidence" value="ECO:0007669"/>
    <property type="project" value="UniProtKB-UniRule"/>
</dbReference>
<dbReference type="GO" id="GO:0051992">
    <property type="term" value="F:UDP-N-acetylmuramoyl-L-alanyl-D-glutamyl-meso-2,6-diaminopimelyl-D-alanyl-D-alanine:undecaprenyl-phosphate transferase activity"/>
    <property type="evidence" value="ECO:0007669"/>
    <property type="project" value="RHEA"/>
</dbReference>
<dbReference type="GO" id="GO:0051301">
    <property type="term" value="P:cell division"/>
    <property type="evidence" value="ECO:0007669"/>
    <property type="project" value="UniProtKB-KW"/>
</dbReference>
<dbReference type="GO" id="GO:0071555">
    <property type="term" value="P:cell wall organization"/>
    <property type="evidence" value="ECO:0007669"/>
    <property type="project" value="UniProtKB-KW"/>
</dbReference>
<dbReference type="GO" id="GO:0009252">
    <property type="term" value="P:peptidoglycan biosynthetic process"/>
    <property type="evidence" value="ECO:0007669"/>
    <property type="project" value="UniProtKB-UniRule"/>
</dbReference>
<dbReference type="GO" id="GO:0008360">
    <property type="term" value="P:regulation of cell shape"/>
    <property type="evidence" value="ECO:0007669"/>
    <property type="project" value="UniProtKB-KW"/>
</dbReference>
<dbReference type="CDD" id="cd06852">
    <property type="entry name" value="GT_MraY"/>
    <property type="match status" value="1"/>
</dbReference>
<dbReference type="HAMAP" id="MF_00038">
    <property type="entry name" value="MraY"/>
    <property type="match status" value="1"/>
</dbReference>
<dbReference type="InterPro" id="IPR000715">
    <property type="entry name" value="Glycosyl_transferase_4"/>
</dbReference>
<dbReference type="InterPro" id="IPR003524">
    <property type="entry name" value="PNAcMuramoyl-5peptid_Trfase"/>
</dbReference>
<dbReference type="InterPro" id="IPR018480">
    <property type="entry name" value="PNAcMuramoyl-5peptid_Trfase_CS"/>
</dbReference>
<dbReference type="NCBIfam" id="TIGR00445">
    <property type="entry name" value="mraY"/>
    <property type="match status" value="1"/>
</dbReference>
<dbReference type="PANTHER" id="PTHR22926">
    <property type="entry name" value="PHOSPHO-N-ACETYLMURAMOYL-PENTAPEPTIDE-TRANSFERASE"/>
    <property type="match status" value="1"/>
</dbReference>
<dbReference type="PANTHER" id="PTHR22926:SF5">
    <property type="entry name" value="PHOSPHO-N-ACETYLMURAMOYL-PENTAPEPTIDE-TRANSFERASE HOMOLOG"/>
    <property type="match status" value="1"/>
</dbReference>
<dbReference type="Pfam" id="PF00953">
    <property type="entry name" value="Glycos_transf_4"/>
    <property type="match status" value="1"/>
</dbReference>
<dbReference type="PROSITE" id="PS01348">
    <property type="entry name" value="MRAY_2"/>
    <property type="match status" value="1"/>
</dbReference>